<gene>
    <name evidence="1" type="primary">bioD2</name>
    <name type="ordered locus">YPO2269</name>
    <name type="ordered locus">y2111</name>
    <name type="ordered locus">YP_2065</name>
</gene>
<reference key="1">
    <citation type="journal article" date="2001" name="Nature">
        <title>Genome sequence of Yersinia pestis, the causative agent of plague.</title>
        <authorList>
            <person name="Parkhill J."/>
            <person name="Wren B.W."/>
            <person name="Thomson N.R."/>
            <person name="Titball R.W."/>
            <person name="Holden M.T.G."/>
            <person name="Prentice M.B."/>
            <person name="Sebaihia M."/>
            <person name="James K.D."/>
            <person name="Churcher C.M."/>
            <person name="Mungall K.L."/>
            <person name="Baker S."/>
            <person name="Basham D."/>
            <person name="Bentley S.D."/>
            <person name="Brooks K."/>
            <person name="Cerdeno-Tarraga A.-M."/>
            <person name="Chillingworth T."/>
            <person name="Cronin A."/>
            <person name="Davies R.M."/>
            <person name="Davis P."/>
            <person name="Dougan G."/>
            <person name="Feltwell T."/>
            <person name="Hamlin N."/>
            <person name="Holroyd S."/>
            <person name="Jagels K."/>
            <person name="Karlyshev A.V."/>
            <person name="Leather S."/>
            <person name="Moule S."/>
            <person name="Oyston P.C.F."/>
            <person name="Quail M.A."/>
            <person name="Rutherford K.M."/>
            <person name="Simmonds M."/>
            <person name="Skelton J."/>
            <person name="Stevens K."/>
            <person name="Whitehead S."/>
            <person name="Barrell B.G."/>
        </authorList>
    </citation>
    <scope>NUCLEOTIDE SEQUENCE [LARGE SCALE GENOMIC DNA]</scope>
    <source>
        <strain>CO-92 / Biovar Orientalis</strain>
    </source>
</reference>
<reference key="2">
    <citation type="journal article" date="2002" name="J. Bacteriol.">
        <title>Genome sequence of Yersinia pestis KIM.</title>
        <authorList>
            <person name="Deng W."/>
            <person name="Burland V."/>
            <person name="Plunkett G. III"/>
            <person name="Boutin A."/>
            <person name="Mayhew G.F."/>
            <person name="Liss P."/>
            <person name="Perna N.T."/>
            <person name="Rose D.J."/>
            <person name="Mau B."/>
            <person name="Zhou S."/>
            <person name="Schwartz D.C."/>
            <person name="Fetherston J.D."/>
            <person name="Lindler L.E."/>
            <person name="Brubaker R.R."/>
            <person name="Plano G.V."/>
            <person name="Straley S.C."/>
            <person name="McDonough K.A."/>
            <person name="Nilles M.L."/>
            <person name="Matson J.S."/>
            <person name="Blattner F.R."/>
            <person name="Perry R.D."/>
        </authorList>
    </citation>
    <scope>NUCLEOTIDE SEQUENCE [LARGE SCALE GENOMIC DNA]</scope>
    <source>
        <strain>KIM10+ / Biovar Mediaevalis</strain>
    </source>
</reference>
<reference key="3">
    <citation type="journal article" date="2004" name="DNA Res.">
        <title>Complete genome sequence of Yersinia pestis strain 91001, an isolate avirulent to humans.</title>
        <authorList>
            <person name="Song Y."/>
            <person name="Tong Z."/>
            <person name="Wang J."/>
            <person name="Wang L."/>
            <person name="Guo Z."/>
            <person name="Han Y."/>
            <person name="Zhang J."/>
            <person name="Pei D."/>
            <person name="Zhou D."/>
            <person name="Qin H."/>
            <person name="Pang X."/>
            <person name="Han Y."/>
            <person name="Zhai J."/>
            <person name="Li M."/>
            <person name="Cui B."/>
            <person name="Qi Z."/>
            <person name="Jin L."/>
            <person name="Dai R."/>
            <person name="Chen F."/>
            <person name="Li S."/>
            <person name="Ye C."/>
            <person name="Du Z."/>
            <person name="Lin W."/>
            <person name="Wang J."/>
            <person name="Yu J."/>
            <person name="Yang H."/>
            <person name="Wang J."/>
            <person name="Huang P."/>
            <person name="Yang R."/>
        </authorList>
    </citation>
    <scope>NUCLEOTIDE SEQUENCE [LARGE SCALE GENOMIC DNA]</scope>
    <source>
        <strain>91001 / Biovar Mediaevalis</strain>
    </source>
</reference>
<keyword id="KW-0067">ATP-binding</keyword>
<keyword id="KW-0093">Biotin biosynthesis</keyword>
<keyword id="KW-0963">Cytoplasm</keyword>
<keyword id="KW-0436">Ligase</keyword>
<keyword id="KW-0460">Magnesium</keyword>
<keyword id="KW-0479">Metal-binding</keyword>
<keyword id="KW-0547">Nucleotide-binding</keyword>
<keyword id="KW-1185">Reference proteome</keyword>
<proteinExistence type="inferred from homology"/>
<protein>
    <recommendedName>
        <fullName evidence="1">ATP-dependent dethiobiotin synthetase BioD 2</fullName>
        <ecNumber evidence="1">6.3.3.3</ecNumber>
    </recommendedName>
    <alternativeName>
        <fullName evidence="1">DTB synthetase 2</fullName>
        <shortName evidence="1">DTBS 2</shortName>
    </alternativeName>
    <alternativeName>
        <fullName evidence="1">Dethiobiotin synthase 2</fullName>
    </alternativeName>
</protein>
<comment type="function">
    <text evidence="1">Catalyzes a mechanistically unusual reaction, the ATP-dependent insertion of CO2 between the N7 and N8 nitrogen atoms of 7,8-diaminopelargonic acid (DAPA, also called 7,8-diammoniononanoate) to form a ureido ring.</text>
</comment>
<comment type="catalytic activity">
    <reaction evidence="1">
        <text>(7R,8S)-7,8-diammoniononanoate + CO2 + ATP = (4R,5S)-dethiobiotin + ADP + phosphate + 3 H(+)</text>
        <dbReference type="Rhea" id="RHEA:15805"/>
        <dbReference type="ChEBI" id="CHEBI:15378"/>
        <dbReference type="ChEBI" id="CHEBI:16526"/>
        <dbReference type="ChEBI" id="CHEBI:30616"/>
        <dbReference type="ChEBI" id="CHEBI:43474"/>
        <dbReference type="ChEBI" id="CHEBI:149469"/>
        <dbReference type="ChEBI" id="CHEBI:149473"/>
        <dbReference type="ChEBI" id="CHEBI:456216"/>
        <dbReference type="EC" id="6.3.3.3"/>
    </reaction>
</comment>
<comment type="cofactor">
    <cofactor evidence="1">
        <name>Mg(2+)</name>
        <dbReference type="ChEBI" id="CHEBI:18420"/>
    </cofactor>
</comment>
<comment type="pathway">
    <text evidence="1">Cofactor biosynthesis; biotin biosynthesis; biotin from 7,8-diaminononanoate: step 1/2.</text>
</comment>
<comment type="subunit">
    <text evidence="1">Homodimer.</text>
</comment>
<comment type="subcellular location">
    <subcellularLocation>
        <location evidence="1">Cytoplasm</location>
    </subcellularLocation>
</comment>
<comment type="similarity">
    <text evidence="1">Belongs to the dethiobiotin synthetase family.</text>
</comment>
<comment type="sequence caution" evidence="2">
    <conflict type="erroneous initiation">
        <sequence resource="EMBL-CDS" id="AAM85674"/>
    </conflict>
    <text>Extended N-terminus.</text>
</comment>
<comment type="sequence caution" evidence="2">
    <conflict type="erroneous initiation">
        <sequence resource="EMBL-CDS" id="AAS62277"/>
    </conflict>
    <text>Extended N-terminus.</text>
</comment>
<evidence type="ECO:0000255" key="1">
    <source>
        <dbReference type="HAMAP-Rule" id="MF_00336"/>
    </source>
</evidence>
<evidence type="ECO:0000305" key="2"/>
<dbReference type="EC" id="6.3.3.3" evidence="1"/>
<dbReference type="EMBL" id="AL590842">
    <property type="protein sequence ID" value="CAL20896.1"/>
    <property type="molecule type" value="Genomic_DNA"/>
</dbReference>
<dbReference type="EMBL" id="AE009952">
    <property type="protein sequence ID" value="AAM85674.1"/>
    <property type="status" value="ALT_INIT"/>
    <property type="molecule type" value="Genomic_DNA"/>
</dbReference>
<dbReference type="EMBL" id="AE017042">
    <property type="protein sequence ID" value="AAS62277.1"/>
    <property type="status" value="ALT_INIT"/>
    <property type="molecule type" value="Genomic_DNA"/>
</dbReference>
<dbReference type="PIR" id="AE0276">
    <property type="entry name" value="AE0276"/>
</dbReference>
<dbReference type="RefSeq" id="YP_002347235.1">
    <property type="nucleotide sequence ID" value="NC_003143.1"/>
</dbReference>
<dbReference type="SMR" id="P69953"/>
<dbReference type="STRING" id="214092.YPO2269"/>
<dbReference type="PaxDb" id="214092-YPO2269"/>
<dbReference type="DNASU" id="1147058"/>
<dbReference type="EnsemblBacteria" id="AAS62277">
    <property type="protein sequence ID" value="AAS62277"/>
    <property type="gene ID" value="YP_2065"/>
</dbReference>
<dbReference type="KEGG" id="ype:YPO2269"/>
<dbReference type="KEGG" id="ypk:y2111"/>
<dbReference type="KEGG" id="ypm:YP_2065"/>
<dbReference type="PATRIC" id="fig|214092.21.peg.2666"/>
<dbReference type="eggNOG" id="COG0132">
    <property type="taxonomic scope" value="Bacteria"/>
</dbReference>
<dbReference type="HOGENOM" id="CLU_072551_0_0_6"/>
<dbReference type="OMA" id="WRTLMND"/>
<dbReference type="OrthoDB" id="9802097at2"/>
<dbReference type="UniPathway" id="UPA00078">
    <property type="reaction ID" value="UER00161"/>
</dbReference>
<dbReference type="Proteomes" id="UP000000815">
    <property type="component" value="Chromosome"/>
</dbReference>
<dbReference type="Proteomes" id="UP000001019">
    <property type="component" value="Chromosome"/>
</dbReference>
<dbReference type="Proteomes" id="UP000002490">
    <property type="component" value="Chromosome"/>
</dbReference>
<dbReference type="GO" id="GO:0005829">
    <property type="term" value="C:cytosol"/>
    <property type="evidence" value="ECO:0000318"/>
    <property type="project" value="GO_Central"/>
</dbReference>
<dbReference type="GO" id="GO:0005524">
    <property type="term" value="F:ATP binding"/>
    <property type="evidence" value="ECO:0007669"/>
    <property type="project" value="UniProtKB-UniRule"/>
</dbReference>
<dbReference type="GO" id="GO:0004141">
    <property type="term" value="F:dethiobiotin synthase activity"/>
    <property type="evidence" value="ECO:0000318"/>
    <property type="project" value="GO_Central"/>
</dbReference>
<dbReference type="GO" id="GO:0000287">
    <property type="term" value="F:magnesium ion binding"/>
    <property type="evidence" value="ECO:0007669"/>
    <property type="project" value="UniProtKB-UniRule"/>
</dbReference>
<dbReference type="GO" id="GO:0009102">
    <property type="term" value="P:biotin biosynthetic process"/>
    <property type="evidence" value="ECO:0000318"/>
    <property type="project" value="GO_Central"/>
</dbReference>
<dbReference type="CDD" id="cd03109">
    <property type="entry name" value="DTBS"/>
    <property type="match status" value="1"/>
</dbReference>
<dbReference type="FunFam" id="3.40.50.300:FF:000292">
    <property type="entry name" value="ATP-dependent dethiobiotin synthetase BioD"/>
    <property type="match status" value="1"/>
</dbReference>
<dbReference type="Gene3D" id="3.40.50.300">
    <property type="entry name" value="P-loop containing nucleotide triphosphate hydrolases"/>
    <property type="match status" value="1"/>
</dbReference>
<dbReference type="HAMAP" id="MF_00336">
    <property type="entry name" value="BioD"/>
    <property type="match status" value="1"/>
</dbReference>
<dbReference type="InterPro" id="IPR004472">
    <property type="entry name" value="DTB_synth_BioD"/>
</dbReference>
<dbReference type="InterPro" id="IPR027417">
    <property type="entry name" value="P-loop_NTPase"/>
</dbReference>
<dbReference type="NCBIfam" id="TIGR00347">
    <property type="entry name" value="bioD"/>
    <property type="match status" value="1"/>
</dbReference>
<dbReference type="PANTHER" id="PTHR43210:SF4">
    <property type="entry name" value="ATP-DEPENDENT DETHIOBIOTIN SYNTHETASE BIOD 2"/>
    <property type="match status" value="1"/>
</dbReference>
<dbReference type="PANTHER" id="PTHR43210">
    <property type="entry name" value="DETHIOBIOTIN SYNTHETASE"/>
    <property type="match status" value="1"/>
</dbReference>
<dbReference type="Pfam" id="PF13500">
    <property type="entry name" value="AAA_26"/>
    <property type="match status" value="1"/>
</dbReference>
<dbReference type="PIRSF" id="PIRSF006755">
    <property type="entry name" value="DTB_synth"/>
    <property type="match status" value="1"/>
</dbReference>
<dbReference type="SUPFAM" id="SSF52540">
    <property type="entry name" value="P-loop containing nucleoside triphosphate hydrolases"/>
    <property type="match status" value="1"/>
</dbReference>
<name>BIOD2_YERPE</name>
<feature type="chain" id="PRO_0000188003" description="ATP-dependent dethiobiotin synthetase BioD 2">
    <location>
        <begin position="1"/>
        <end position="222"/>
    </location>
</feature>
<feature type="active site" evidence="1">
    <location>
        <position position="38"/>
    </location>
</feature>
<feature type="binding site" evidence="1">
    <location>
        <position position="17"/>
    </location>
    <ligand>
        <name>Mg(2+)</name>
        <dbReference type="ChEBI" id="CHEBI:18420"/>
    </ligand>
</feature>
<feature type="binding site" evidence="1">
    <location>
        <position position="42"/>
    </location>
    <ligand>
        <name>substrate</name>
    </ligand>
</feature>
<feature type="binding site" evidence="1">
    <location>
        <position position="55"/>
    </location>
    <ligand>
        <name>ATP</name>
        <dbReference type="ChEBI" id="CHEBI:30616"/>
    </ligand>
</feature>
<feature type="binding site" evidence="1">
    <location>
        <position position="55"/>
    </location>
    <ligand>
        <name>Mg(2+)</name>
        <dbReference type="ChEBI" id="CHEBI:18420"/>
    </ligand>
</feature>
<feature type="binding site" evidence="1">
    <location>
        <begin position="112"/>
        <end position="115"/>
    </location>
    <ligand>
        <name>ATP</name>
        <dbReference type="ChEBI" id="CHEBI:30616"/>
    </ligand>
</feature>
<feature type="binding site" evidence="1">
    <location>
        <position position="112"/>
    </location>
    <ligand>
        <name>Mg(2+)</name>
        <dbReference type="ChEBI" id="CHEBI:18420"/>
    </ligand>
</feature>
<feature type="binding site" evidence="1">
    <location>
        <begin position="172"/>
        <end position="173"/>
    </location>
    <ligand>
        <name>ATP</name>
        <dbReference type="ChEBI" id="CHEBI:30616"/>
    </ligand>
</feature>
<feature type="binding site" evidence="1">
    <location>
        <begin position="201"/>
        <end position="203"/>
    </location>
    <ligand>
        <name>ATP</name>
        <dbReference type="ChEBI" id="CHEBI:30616"/>
    </ligand>
</feature>
<feature type="binding site" evidence="1">
    <location>
        <position position="208"/>
    </location>
    <ligand>
        <name>ATP</name>
        <dbReference type="ChEBI" id="CHEBI:30616"/>
    </ligand>
</feature>
<organism>
    <name type="scientific">Yersinia pestis</name>
    <dbReference type="NCBI Taxonomy" id="632"/>
    <lineage>
        <taxon>Bacteria</taxon>
        <taxon>Pseudomonadati</taxon>
        <taxon>Pseudomonadota</taxon>
        <taxon>Gammaproteobacteria</taxon>
        <taxon>Enterobacterales</taxon>
        <taxon>Yersiniaceae</taxon>
        <taxon>Yersinia</taxon>
    </lineage>
</organism>
<sequence>MLTRLFVTGTDTAVGKTVVSRALLQALSQNGRTAVGYKPVATESKETSEGLRNQDALILQASSSIELNYQEVNPYPLQGDVIHACTDTLINYEKMTEGLQCLSAKADTVIVEGCGGWKVMMNDQRFYSDWVVQEQLPVILVVGIKLGCINHALLTAQAIINDGLPLLGWVANRINPGLAHYAETIAMLRDRLAAPQLGQLPYLPRPEEKPLAKYLDLTAISG</sequence>
<accession>P69953</accession>
<accession>Q0WEQ3</accession>
<accession>Q66AD9</accession>
<accession>Q9AGD4</accession>